<proteinExistence type="evidence at protein level"/>
<reference key="1">
    <citation type="journal article" date="2003" name="Genome Res.">
        <title>The secreted protein discovery initiative (SPDI), a large-scale effort to identify novel human secreted and transmembrane proteins: a bioinformatics assessment.</title>
        <authorList>
            <person name="Clark H.F."/>
            <person name="Gurney A.L."/>
            <person name="Abaya E."/>
            <person name="Baker K."/>
            <person name="Baldwin D.T."/>
            <person name="Brush J."/>
            <person name="Chen J."/>
            <person name="Chow B."/>
            <person name="Chui C."/>
            <person name="Crowley C."/>
            <person name="Currell B."/>
            <person name="Deuel B."/>
            <person name="Dowd P."/>
            <person name="Eaton D."/>
            <person name="Foster J.S."/>
            <person name="Grimaldi C."/>
            <person name="Gu Q."/>
            <person name="Hass P.E."/>
            <person name="Heldens S."/>
            <person name="Huang A."/>
            <person name="Kim H.S."/>
            <person name="Klimowski L."/>
            <person name="Jin Y."/>
            <person name="Johnson S."/>
            <person name="Lee J."/>
            <person name="Lewis L."/>
            <person name="Liao D."/>
            <person name="Mark M.R."/>
            <person name="Robbie E."/>
            <person name="Sanchez C."/>
            <person name="Schoenfeld J."/>
            <person name="Seshagiri S."/>
            <person name="Simmons L."/>
            <person name="Singh J."/>
            <person name="Smith V."/>
            <person name="Stinson J."/>
            <person name="Vagts A."/>
            <person name="Vandlen R.L."/>
            <person name="Watanabe C."/>
            <person name="Wieand D."/>
            <person name="Woods K."/>
            <person name="Xie M.-H."/>
            <person name="Yansura D.G."/>
            <person name="Yi S."/>
            <person name="Yu G."/>
            <person name="Yuan J."/>
            <person name="Zhang M."/>
            <person name="Zhang Z."/>
            <person name="Goddard A.D."/>
            <person name="Wood W.I."/>
            <person name="Godowski P.J."/>
            <person name="Gray A.M."/>
        </authorList>
    </citation>
    <scope>NUCLEOTIDE SEQUENCE [LARGE SCALE MRNA] (ISOFORM 2)</scope>
    <scope>VARIANT MET-76</scope>
</reference>
<reference key="2">
    <citation type="journal article" date="2006" name="Nature">
        <title>The DNA sequence and biological annotation of human chromosome 1.</title>
        <authorList>
            <person name="Gregory S.G."/>
            <person name="Barlow K.F."/>
            <person name="McLay K.E."/>
            <person name="Kaul R."/>
            <person name="Swarbreck D."/>
            <person name="Dunham A."/>
            <person name="Scott C.E."/>
            <person name="Howe K.L."/>
            <person name="Woodfine K."/>
            <person name="Spencer C.C.A."/>
            <person name="Jones M.C."/>
            <person name="Gillson C."/>
            <person name="Searle S."/>
            <person name="Zhou Y."/>
            <person name="Kokocinski F."/>
            <person name="McDonald L."/>
            <person name="Evans R."/>
            <person name="Phillips K."/>
            <person name="Atkinson A."/>
            <person name="Cooper R."/>
            <person name="Jones C."/>
            <person name="Hall R.E."/>
            <person name="Andrews T.D."/>
            <person name="Lloyd C."/>
            <person name="Ainscough R."/>
            <person name="Almeida J.P."/>
            <person name="Ambrose K.D."/>
            <person name="Anderson F."/>
            <person name="Andrew R.W."/>
            <person name="Ashwell R.I.S."/>
            <person name="Aubin K."/>
            <person name="Babbage A.K."/>
            <person name="Bagguley C.L."/>
            <person name="Bailey J."/>
            <person name="Beasley H."/>
            <person name="Bethel G."/>
            <person name="Bird C.P."/>
            <person name="Bray-Allen S."/>
            <person name="Brown J.Y."/>
            <person name="Brown A.J."/>
            <person name="Buckley D."/>
            <person name="Burton J."/>
            <person name="Bye J."/>
            <person name="Carder C."/>
            <person name="Chapman J.C."/>
            <person name="Clark S.Y."/>
            <person name="Clarke G."/>
            <person name="Clee C."/>
            <person name="Cobley V."/>
            <person name="Collier R.E."/>
            <person name="Corby N."/>
            <person name="Coville G.J."/>
            <person name="Davies J."/>
            <person name="Deadman R."/>
            <person name="Dunn M."/>
            <person name="Earthrowl M."/>
            <person name="Ellington A.G."/>
            <person name="Errington H."/>
            <person name="Frankish A."/>
            <person name="Frankland J."/>
            <person name="French L."/>
            <person name="Garner P."/>
            <person name="Garnett J."/>
            <person name="Gay L."/>
            <person name="Ghori M.R.J."/>
            <person name="Gibson R."/>
            <person name="Gilby L.M."/>
            <person name="Gillett W."/>
            <person name="Glithero R.J."/>
            <person name="Grafham D.V."/>
            <person name="Griffiths C."/>
            <person name="Griffiths-Jones S."/>
            <person name="Grocock R."/>
            <person name="Hammond S."/>
            <person name="Harrison E.S.I."/>
            <person name="Hart E."/>
            <person name="Haugen E."/>
            <person name="Heath P.D."/>
            <person name="Holmes S."/>
            <person name="Holt K."/>
            <person name="Howden P.J."/>
            <person name="Hunt A.R."/>
            <person name="Hunt S.E."/>
            <person name="Hunter G."/>
            <person name="Isherwood J."/>
            <person name="James R."/>
            <person name="Johnson C."/>
            <person name="Johnson D."/>
            <person name="Joy A."/>
            <person name="Kay M."/>
            <person name="Kershaw J.K."/>
            <person name="Kibukawa M."/>
            <person name="Kimberley A.M."/>
            <person name="King A."/>
            <person name="Knights A.J."/>
            <person name="Lad H."/>
            <person name="Laird G."/>
            <person name="Lawlor S."/>
            <person name="Leongamornlert D.A."/>
            <person name="Lloyd D.M."/>
            <person name="Loveland J."/>
            <person name="Lovell J."/>
            <person name="Lush M.J."/>
            <person name="Lyne R."/>
            <person name="Martin S."/>
            <person name="Mashreghi-Mohammadi M."/>
            <person name="Matthews L."/>
            <person name="Matthews N.S.W."/>
            <person name="McLaren S."/>
            <person name="Milne S."/>
            <person name="Mistry S."/>
            <person name="Moore M.J.F."/>
            <person name="Nickerson T."/>
            <person name="O'Dell C.N."/>
            <person name="Oliver K."/>
            <person name="Palmeiri A."/>
            <person name="Palmer S.A."/>
            <person name="Parker A."/>
            <person name="Patel D."/>
            <person name="Pearce A.V."/>
            <person name="Peck A.I."/>
            <person name="Pelan S."/>
            <person name="Phelps K."/>
            <person name="Phillimore B.J."/>
            <person name="Plumb R."/>
            <person name="Rajan J."/>
            <person name="Raymond C."/>
            <person name="Rouse G."/>
            <person name="Saenphimmachak C."/>
            <person name="Sehra H.K."/>
            <person name="Sheridan E."/>
            <person name="Shownkeen R."/>
            <person name="Sims S."/>
            <person name="Skuce C.D."/>
            <person name="Smith M."/>
            <person name="Steward C."/>
            <person name="Subramanian S."/>
            <person name="Sycamore N."/>
            <person name="Tracey A."/>
            <person name="Tromans A."/>
            <person name="Van Helmond Z."/>
            <person name="Wall M."/>
            <person name="Wallis J.M."/>
            <person name="White S."/>
            <person name="Whitehead S.L."/>
            <person name="Wilkinson J.E."/>
            <person name="Willey D.L."/>
            <person name="Williams H."/>
            <person name="Wilming L."/>
            <person name="Wray P.W."/>
            <person name="Wu Z."/>
            <person name="Coulson A."/>
            <person name="Vaudin M."/>
            <person name="Sulston J.E."/>
            <person name="Durbin R.M."/>
            <person name="Hubbard T."/>
            <person name="Wooster R."/>
            <person name="Dunham I."/>
            <person name="Carter N.P."/>
            <person name="McVean G."/>
            <person name="Ross M.T."/>
            <person name="Harrow J."/>
            <person name="Olson M.V."/>
            <person name="Beck S."/>
            <person name="Rogers J."/>
            <person name="Bentley D.R."/>
        </authorList>
    </citation>
    <scope>NUCLEOTIDE SEQUENCE [LARGE SCALE GENOMIC DNA]</scope>
    <scope>VARIANT MET-76</scope>
</reference>
<reference key="3">
    <citation type="submission" date="2005-09" db="EMBL/GenBank/DDBJ databases">
        <authorList>
            <person name="Mural R.J."/>
            <person name="Istrail S."/>
            <person name="Sutton G.G."/>
            <person name="Florea L."/>
            <person name="Halpern A.L."/>
            <person name="Mobarry C.M."/>
            <person name="Lippert R."/>
            <person name="Walenz B."/>
            <person name="Shatkay H."/>
            <person name="Dew I."/>
            <person name="Miller J.R."/>
            <person name="Flanigan M.J."/>
            <person name="Edwards N.J."/>
            <person name="Bolanos R."/>
            <person name="Fasulo D."/>
            <person name="Halldorsson B.V."/>
            <person name="Hannenhalli S."/>
            <person name="Turner R."/>
            <person name="Yooseph S."/>
            <person name="Lu F."/>
            <person name="Nusskern D.R."/>
            <person name="Shue B.C."/>
            <person name="Zheng X.H."/>
            <person name="Zhong F."/>
            <person name="Delcher A.L."/>
            <person name="Huson D.H."/>
            <person name="Kravitz S.A."/>
            <person name="Mouchard L."/>
            <person name="Reinert K."/>
            <person name="Remington K.A."/>
            <person name="Clark A.G."/>
            <person name="Waterman M.S."/>
            <person name="Eichler E.E."/>
            <person name="Adams M.D."/>
            <person name="Hunkapiller M.W."/>
            <person name="Myers E.W."/>
            <person name="Venter J.C."/>
        </authorList>
    </citation>
    <scope>NUCLEOTIDE SEQUENCE [LARGE SCALE GENOMIC DNA]</scope>
    <scope>VARIANT MET-76</scope>
</reference>
<reference key="4">
    <citation type="journal article" date="2004" name="Genome Res.">
        <title>The status, quality, and expansion of the NIH full-length cDNA project: the Mammalian Gene Collection (MGC).</title>
        <authorList>
            <consortium name="The MGC Project Team"/>
        </authorList>
    </citation>
    <scope>NUCLEOTIDE SEQUENCE [LARGE SCALE MRNA] (ISOFORM 2)</scope>
    <scope>VARIANT MET-76</scope>
</reference>
<reference key="5">
    <citation type="journal article" date="2004" name="Protein Sci.">
        <title>Signal peptide prediction based on analysis of experimentally verified cleavage sites.</title>
        <authorList>
            <person name="Zhang Z."/>
            <person name="Henzel W.J."/>
        </authorList>
    </citation>
    <scope>PROTEIN SEQUENCE OF 30-44</scope>
</reference>
<accession>Q6UWJ8</accession>
<accession>B2RPJ0</accession>
<accession>Q5JXD6</accession>
<comment type="interaction">
    <interactant intactId="EBI-13362802">
        <id>Q6UWJ8-2</id>
    </interactant>
    <interactant intactId="EBI-10305400">
        <id>Q8N682</id>
        <label>DRAM1</label>
    </interactant>
    <organismsDiffer>false</organismsDiffer>
    <experiments>3</experiments>
</comment>
<comment type="interaction">
    <interactant intactId="EBI-13362802">
        <id>Q6UWJ8-2</id>
    </interactant>
    <interactant intactId="EBI-3919291">
        <id>Q9Y342</id>
        <label>PLLP</label>
    </interactant>
    <organismsDiffer>false</organismsDiffer>
    <experiments>3</experiments>
</comment>
<comment type="subcellular location">
    <subcellularLocation>
        <location evidence="5">Membrane</location>
        <topology evidence="5">Single-pass type I membrane protein</topology>
    </subcellularLocation>
</comment>
<comment type="alternative products">
    <event type="alternative splicing"/>
    <isoform>
        <id>Q6UWJ8-1</id>
        <name>1</name>
        <sequence type="displayed"/>
    </isoform>
    <isoform>
        <id>Q6UWJ8-2</id>
        <name>2</name>
        <sequence type="described" ref="VSP_017031"/>
    </isoform>
</comment>
<comment type="similarity">
    <text evidence="5">Belongs to the CD164 family.</text>
</comment>
<dbReference type="EMBL" id="AY358761">
    <property type="protein sequence ID" value="AAQ89121.1"/>
    <property type="molecule type" value="mRNA"/>
</dbReference>
<dbReference type="EMBL" id="AL096774">
    <property type="protein sequence ID" value="CAI19568.1"/>
    <property type="molecule type" value="Genomic_DNA"/>
</dbReference>
<dbReference type="EMBL" id="AL096774">
    <property type="protein sequence ID" value="CAI19569.1"/>
    <property type="molecule type" value="Genomic_DNA"/>
</dbReference>
<dbReference type="EMBL" id="CH471059">
    <property type="protein sequence ID" value="EAX07755.1"/>
    <property type="molecule type" value="Genomic_DNA"/>
</dbReference>
<dbReference type="EMBL" id="BC137466">
    <property type="protein sequence ID" value="AAI37467.1"/>
    <property type="molecule type" value="mRNA"/>
</dbReference>
<dbReference type="CCDS" id="CCDS302.1">
    <molecule id="Q6UWJ8-2"/>
</dbReference>
<dbReference type="CCDS" id="CCDS81287.1">
    <molecule id="Q6UWJ8-1"/>
</dbReference>
<dbReference type="RefSeq" id="NP_001317377.1">
    <molecule id="Q6UWJ8-1"/>
    <property type="nucleotide sequence ID" value="NM_001330448.1"/>
</dbReference>
<dbReference type="RefSeq" id="NP_997280.2">
    <molecule id="Q6UWJ8-2"/>
    <property type="nucleotide sequence ID" value="NM_207397.5"/>
</dbReference>
<dbReference type="RefSeq" id="XP_011539743.1">
    <molecule id="Q6UWJ8-2"/>
    <property type="nucleotide sequence ID" value="XM_011541441.2"/>
</dbReference>
<dbReference type="BioGRID" id="132771">
    <property type="interactions" value="36"/>
</dbReference>
<dbReference type="FunCoup" id="Q6UWJ8">
    <property type="interactions" value="23"/>
</dbReference>
<dbReference type="IntAct" id="Q6UWJ8">
    <property type="interactions" value="7"/>
</dbReference>
<dbReference type="STRING" id="9606.ENSP00000363142"/>
<dbReference type="GlyCosmos" id="Q6UWJ8">
    <property type="glycosylation" value="2 sites, No reported glycans"/>
</dbReference>
<dbReference type="GlyGen" id="Q6UWJ8">
    <property type="glycosylation" value="4 sites, 1 O-linked glycan (2 sites)"/>
</dbReference>
<dbReference type="iPTMnet" id="Q6UWJ8"/>
<dbReference type="PhosphoSitePlus" id="Q6UWJ8"/>
<dbReference type="BioMuta" id="CD164L2"/>
<dbReference type="DMDM" id="85700457"/>
<dbReference type="PaxDb" id="9606-ENSP00000363139"/>
<dbReference type="ProteomicsDB" id="67487">
    <molecule id="Q6UWJ8-1"/>
</dbReference>
<dbReference type="ProteomicsDB" id="67488">
    <molecule id="Q6UWJ8-2"/>
</dbReference>
<dbReference type="Antibodypedia" id="74085">
    <property type="antibodies" value="12 antibodies from 9 providers"/>
</dbReference>
<dbReference type="DNASU" id="388611"/>
<dbReference type="Ensembl" id="ENST00000374027.7">
    <molecule id="Q6UWJ8-2"/>
    <property type="protein sequence ID" value="ENSP00000363139.3"/>
    <property type="gene ID" value="ENSG00000174950.11"/>
</dbReference>
<dbReference type="Ensembl" id="ENST00000374030.3">
    <molecule id="Q6UWJ8-1"/>
    <property type="protein sequence ID" value="ENSP00000363142.1"/>
    <property type="gene ID" value="ENSG00000174950.11"/>
</dbReference>
<dbReference type="GeneID" id="388611"/>
<dbReference type="KEGG" id="hsa:388611"/>
<dbReference type="MANE-Select" id="ENST00000374030.3">
    <property type="protein sequence ID" value="ENSP00000363142.1"/>
    <property type="RefSeq nucleotide sequence ID" value="NM_001330448.1"/>
    <property type="RefSeq protein sequence ID" value="NP_001317377.1"/>
</dbReference>
<dbReference type="UCSC" id="uc031tuv.2">
    <molecule id="Q6UWJ8-1"/>
    <property type="organism name" value="human"/>
</dbReference>
<dbReference type="AGR" id="HGNC:32043"/>
<dbReference type="CTD" id="388611"/>
<dbReference type="DisGeNET" id="388611"/>
<dbReference type="GeneCards" id="CD164L2"/>
<dbReference type="HGNC" id="HGNC:32043">
    <property type="gene designation" value="CD164L2"/>
</dbReference>
<dbReference type="HPA" id="ENSG00000174950">
    <property type="expression patterns" value="Tissue enhanced (esophagus, fallopian tube, salivary gland)"/>
</dbReference>
<dbReference type="neXtProt" id="NX_Q6UWJ8"/>
<dbReference type="OpenTargets" id="ENSG00000174950"/>
<dbReference type="PharmGKB" id="PA142672146"/>
<dbReference type="VEuPathDB" id="HostDB:ENSG00000174950"/>
<dbReference type="eggNOG" id="ENOG502S6M0">
    <property type="taxonomic scope" value="Eukaryota"/>
</dbReference>
<dbReference type="GeneTree" id="ENSGT00530000063929"/>
<dbReference type="HOGENOM" id="CLU_133331_0_0_1"/>
<dbReference type="InParanoid" id="Q6UWJ8"/>
<dbReference type="OMA" id="VQGGCKQ"/>
<dbReference type="OrthoDB" id="6160056at2759"/>
<dbReference type="PAN-GO" id="Q6UWJ8">
    <property type="GO annotations" value="1 GO annotation based on evolutionary models"/>
</dbReference>
<dbReference type="PhylomeDB" id="Q6UWJ8"/>
<dbReference type="TreeFam" id="TF333380"/>
<dbReference type="PathwayCommons" id="Q6UWJ8"/>
<dbReference type="SignaLink" id="Q6UWJ8"/>
<dbReference type="BioGRID-ORCS" id="388611">
    <property type="hits" value="11 hits in 1145 CRISPR screens"/>
</dbReference>
<dbReference type="GenomeRNAi" id="388611"/>
<dbReference type="Pharos" id="Q6UWJ8">
    <property type="development level" value="Tdark"/>
</dbReference>
<dbReference type="PRO" id="PR:Q6UWJ8"/>
<dbReference type="Proteomes" id="UP000005640">
    <property type="component" value="Chromosome 1"/>
</dbReference>
<dbReference type="RNAct" id="Q6UWJ8">
    <property type="molecule type" value="protein"/>
</dbReference>
<dbReference type="Bgee" id="ENSG00000174950">
    <property type="expression patterns" value="Expressed in right uterine tube and 79 other cell types or tissues"/>
</dbReference>
<dbReference type="GO" id="GO:0031410">
    <property type="term" value="C:cytoplasmic vesicle"/>
    <property type="evidence" value="ECO:0000318"/>
    <property type="project" value="GO_Central"/>
</dbReference>
<dbReference type="GO" id="GO:0016020">
    <property type="term" value="C:membrane"/>
    <property type="evidence" value="ECO:0007669"/>
    <property type="project" value="UniProtKB-SubCell"/>
</dbReference>
<dbReference type="InterPro" id="IPR007947">
    <property type="entry name" value="CD164_MGC24"/>
</dbReference>
<dbReference type="PANTHER" id="PTHR11337:SF11">
    <property type="entry name" value="CD164 SIALOMUCIN-LIKE 2 PROTEIN"/>
    <property type="match status" value="1"/>
</dbReference>
<dbReference type="PANTHER" id="PTHR11337">
    <property type="entry name" value="MUCIN/PORIMIN"/>
    <property type="match status" value="1"/>
</dbReference>
<dbReference type="Pfam" id="PF05283">
    <property type="entry name" value="MGC-24"/>
    <property type="match status" value="1"/>
</dbReference>
<sequence length="174" mass="18403">MEAPGPRALRTALCGGCCCLLLCAQLAVAGKGARGFGRGALIRLNIWPAVQGACKQLEVCEHCVEGDGARNLSSCVWEQCRPEEPGHCVAQSEVVKEGCSIYNRSEACPAAHHHPTYEPKTVTTGSPPVPEAHSPGFDGASFIGGVVLVLSLQAVAFFVLHFLKAKDSTYQTLI</sequence>
<feature type="signal peptide" evidence="2">
    <location>
        <begin position="1"/>
        <end position="29"/>
    </location>
</feature>
<feature type="chain" id="PRO_0000045779" description="CD164 sialomucin-like 2 protein">
    <location>
        <begin position="30"/>
        <end position="174"/>
    </location>
</feature>
<feature type="topological domain" description="Extracellular" evidence="1">
    <location>
        <begin position="30"/>
        <end position="141"/>
    </location>
</feature>
<feature type="transmembrane region" description="Helical" evidence="1">
    <location>
        <begin position="142"/>
        <end position="162"/>
    </location>
</feature>
<feature type="topological domain" description="Cytoplasmic" evidence="1">
    <location>
        <begin position="163"/>
        <end position="174"/>
    </location>
</feature>
<feature type="glycosylation site" description="N-linked (GlcNAc...) asparagine" evidence="1">
    <location>
        <position position="71"/>
    </location>
</feature>
<feature type="glycosylation site" description="N-linked (GlcNAc...) asparagine" evidence="1">
    <location>
        <position position="103"/>
    </location>
</feature>
<feature type="splice variant" id="VSP_017031" description="In isoform 2." evidence="3 4">
    <location>
        <position position="174"/>
    </location>
</feature>
<feature type="sequence variant" id="VAR_057508" description="In dbSNP:rs2504779.">
    <original>V</original>
    <variation>M</variation>
    <location>
        <position position="76"/>
    </location>
</feature>
<feature type="sequence conflict" description="In Ref. 1; AAQ89121, 4; AAI37467, 2; CAI19568/CAI19569 and 3; EAX07755." evidence="5" ref="1 4 2 3">
    <original>G</original>
    <variation>R</variation>
    <location>
        <position position="68"/>
    </location>
</feature>
<gene>
    <name type="primary">CD164L2</name>
    <name type="ORF">UNQ6122/PRO20044</name>
</gene>
<evidence type="ECO:0000255" key="1"/>
<evidence type="ECO:0000269" key="2">
    <source>
    </source>
</evidence>
<evidence type="ECO:0000303" key="3">
    <source>
    </source>
</evidence>
<evidence type="ECO:0000303" key="4">
    <source>
    </source>
</evidence>
<evidence type="ECO:0000305" key="5"/>
<protein>
    <recommendedName>
        <fullName>CD164 sialomucin-like 2 protein</fullName>
    </recommendedName>
</protein>
<keyword id="KW-0025">Alternative splicing</keyword>
<keyword id="KW-0903">Direct protein sequencing</keyword>
<keyword id="KW-0325">Glycoprotein</keyword>
<keyword id="KW-0472">Membrane</keyword>
<keyword id="KW-1185">Reference proteome</keyword>
<keyword id="KW-0732">Signal</keyword>
<keyword id="KW-0812">Transmembrane</keyword>
<keyword id="KW-1133">Transmembrane helix</keyword>
<name>C16L2_HUMAN</name>
<organism>
    <name type="scientific">Homo sapiens</name>
    <name type="common">Human</name>
    <dbReference type="NCBI Taxonomy" id="9606"/>
    <lineage>
        <taxon>Eukaryota</taxon>
        <taxon>Metazoa</taxon>
        <taxon>Chordata</taxon>
        <taxon>Craniata</taxon>
        <taxon>Vertebrata</taxon>
        <taxon>Euteleostomi</taxon>
        <taxon>Mammalia</taxon>
        <taxon>Eutheria</taxon>
        <taxon>Euarchontoglires</taxon>
        <taxon>Primates</taxon>
        <taxon>Haplorrhini</taxon>
        <taxon>Catarrhini</taxon>
        <taxon>Hominidae</taxon>
        <taxon>Homo</taxon>
    </lineage>
</organism>